<accession>Q0SN13</accession>
<accession>G0ISD7</accession>
<comment type="function">
    <text evidence="1">This is one of the proteins that bind and probably mediate the attachment of the 5S RNA into the large ribosomal subunit, where it forms part of the central protuberance.</text>
</comment>
<comment type="subunit">
    <text evidence="1">Part of the 50S ribosomal subunit; part of the 5S rRNA/L5/L18/L25 subcomplex. Contacts the 5S and 23S rRNAs.</text>
</comment>
<comment type="similarity">
    <text evidence="1">Belongs to the universal ribosomal protein uL18 family.</text>
</comment>
<keyword id="KW-0687">Ribonucleoprotein</keyword>
<keyword id="KW-0689">Ribosomal protein</keyword>
<keyword id="KW-0694">RNA-binding</keyword>
<keyword id="KW-0699">rRNA-binding</keyword>
<name>RL18_BORAP</name>
<feature type="chain" id="PRO_1000052991" description="Large ribosomal subunit protein uL18">
    <location>
        <begin position="1"/>
        <end position="119"/>
    </location>
</feature>
<dbReference type="EMBL" id="CP000395">
    <property type="protein sequence ID" value="ABH01765.1"/>
    <property type="molecule type" value="Genomic_DNA"/>
</dbReference>
<dbReference type="EMBL" id="CP002933">
    <property type="protein sequence ID" value="AEL69718.1"/>
    <property type="molecule type" value="Genomic_DNA"/>
</dbReference>
<dbReference type="RefSeq" id="WP_011601053.1">
    <property type="nucleotide sequence ID" value="NZ_CP160066.1"/>
</dbReference>
<dbReference type="SMR" id="Q0SN13"/>
<dbReference type="STRING" id="29518.BLA32_01790"/>
<dbReference type="GeneID" id="77265341"/>
<dbReference type="KEGG" id="baf:BAPKO_0522"/>
<dbReference type="KEGG" id="bafz:BafPKo_0510"/>
<dbReference type="PATRIC" id="fig|390236.22.peg.491"/>
<dbReference type="eggNOG" id="COG0256">
    <property type="taxonomic scope" value="Bacteria"/>
</dbReference>
<dbReference type="HOGENOM" id="CLU_098841_0_1_12"/>
<dbReference type="OrthoDB" id="9810939at2"/>
<dbReference type="Proteomes" id="UP000005216">
    <property type="component" value="Chromosome"/>
</dbReference>
<dbReference type="GO" id="GO:0022625">
    <property type="term" value="C:cytosolic large ribosomal subunit"/>
    <property type="evidence" value="ECO:0007669"/>
    <property type="project" value="TreeGrafter"/>
</dbReference>
<dbReference type="GO" id="GO:0008097">
    <property type="term" value="F:5S rRNA binding"/>
    <property type="evidence" value="ECO:0007669"/>
    <property type="project" value="TreeGrafter"/>
</dbReference>
<dbReference type="GO" id="GO:0003735">
    <property type="term" value="F:structural constituent of ribosome"/>
    <property type="evidence" value="ECO:0007669"/>
    <property type="project" value="InterPro"/>
</dbReference>
<dbReference type="GO" id="GO:0006412">
    <property type="term" value="P:translation"/>
    <property type="evidence" value="ECO:0007669"/>
    <property type="project" value="UniProtKB-UniRule"/>
</dbReference>
<dbReference type="CDD" id="cd00432">
    <property type="entry name" value="Ribosomal_L18_L5e"/>
    <property type="match status" value="1"/>
</dbReference>
<dbReference type="FunFam" id="3.30.420.100:FF:000001">
    <property type="entry name" value="50S ribosomal protein L18"/>
    <property type="match status" value="1"/>
</dbReference>
<dbReference type="Gene3D" id="3.30.420.100">
    <property type="match status" value="1"/>
</dbReference>
<dbReference type="HAMAP" id="MF_01337_B">
    <property type="entry name" value="Ribosomal_uL18_B"/>
    <property type="match status" value="1"/>
</dbReference>
<dbReference type="InterPro" id="IPR004389">
    <property type="entry name" value="Ribosomal_uL18_bac-type"/>
</dbReference>
<dbReference type="InterPro" id="IPR005484">
    <property type="entry name" value="Ribosomal_uL18_bac/euk"/>
</dbReference>
<dbReference type="NCBIfam" id="TIGR00060">
    <property type="entry name" value="L18_bact"/>
    <property type="match status" value="1"/>
</dbReference>
<dbReference type="PANTHER" id="PTHR12899">
    <property type="entry name" value="39S RIBOSOMAL PROTEIN L18, MITOCHONDRIAL"/>
    <property type="match status" value="1"/>
</dbReference>
<dbReference type="PANTHER" id="PTHR12899:SF3">
    <property type="entry name" value="LARGE RIBOSOMAL SUBUNIT PROTEIN UL18M"/>
    <property type="match status" value="1"/>
</dbReference>
<dbReference type="Pfam" id="PF00861">
    <property type="entry name" value="Ribosomal_L18p"/>
    <property type="match status" value="1"/>
</dbReference>
<dbReference type="SUPFAM" id="SSF53137">
    <property type="entry name" value="Translational machinery components"/>
    <property type="match status" value="1"/>
</dbReference>
<evidence type="ECO:0000255" key="1">
    <source>
        <dbReference type="HAMAP-Rule" id="MF_01337"/>
    </source>
</evidence>
<evidence type="ECO:0000305" key="2"/>
<protein>
    <recommendedName>
        <fullName evidence="1">Large ribosomal subunit protein uL18</fullName>
    </recommendedName>
    <alternativeName>
        <fullName evidence="2">50S ribosomal protein L18</fullName>
    </alternativeName>
</protein>
<reference key="1">
    <citation type="journal article" date="2006" name="BMC Genomics">
        <title>Comparative genome analysis: selection pressure on the Borrelia vls cassettes is essential for infectivity.</title>
        <authorList>
            <person name="Gloeckner G."/>
            <person name="Schulte-Spechtel U."/>
            <person name="Schilhabel M."/>
            <person name="Felder M."/>
            <person name="Suehnel J."/>
            <person name="Wilske B."/>
            <person name="Platzer M."/>
        </authorList>
    </citation>
    <scope>NUCLEOTIDE SEQUENCE [LARGE SCALE GENOMIC DNA]</scope>
    <source>
        <strain>PKo</strain>
    </source>
</reference>
<reference key="2">
    <citation type="journal article" date="2011" name="J. Bacteriol.">
        <title>Whole-genome sequences of two Borrelia afzelii and two Borrelia garinii Lyme disease agent isolates.</title>
        <authorList>
            <person name="Casjens S.R."/>
            <person name="Mongodin E.F."/>
            <person name="Qiu W.G."/>
            <person name="Dunn J.J."/>
            <person name="Luft B.J."/>
            <person name="Fraser-Liggett C.M."/>
            <person name="Schutzer S.E."/>
        </authorList>
    </citation>
    <scope>NUCLEOTIDE SEQUENCE [LARGE SCALE GENOMIC DNA]</scope>
    <source>
        <strain>PKo</strain>
    </source>
</reference>
<proteinExistence type="inferred from homology"/>
<organism>
    <name type="scientific">Borreliella afzelii (strain PKo)</name>
    <name type="common">Borrelia afzelii</name>
    <dbReference type="NCBI Taxonomy" id="390236"/>
    <lineage>
        <taxon>Bacteria</taxon>
        <taxon>Pseudomonadati</taxon>
        <taxon>Spirochaetota</taxon>
        <taxon>Spirochaetia</taxon>
        <taxon>Spirochaetales</taxon>
        <taxon>Borreliaceae</taxon>
        <taxon>Borreliella</taxon>
    </lineage>
</organism>
<sequence length="119" mass="13794">MKKIKEAEQRKIRRKKRIKDKIGRGIATRPRITIFKSNRYFYAQVIDDSKGHTVASISTIEKSLNLSKNIDDIKKLGEVLAKRLKEKNINNLIFDRNGYKYHGLIASFATSLREFGINI</sequence>
<gene>
    <name evidence="1" type="primary">rplR</name>
    <name type="ordered locus">BAPKO_0522</name>
    <name type="ordered locus">BafPKo_0510</name>
</gene>